<proteinExistence type="evidence at protein level"/>
<sequence>MLKAFLPGTQEEETLSSLQSGKVDAKMEMDDPEKAMATVAQLIEQLHAKTSSPQDKELTTARLLGIAKGKREARRLIGSYGQAMPLFISMLRNGTTLAKVNVASILCVLCKDKDLRLKVLLGGCIPPLLSVLKSGTMETRKAAAEAIYEVSSAGISNDHIGMKIFITEGVVPTLWDQLSLKGNQDKVVEGYVTGALRNLCGVDDGYWRLTLEGSGVDIVVSLLSSDNPNSQANAASLLARLVLSFCDSIQKILNSGVVKSLIQLLEQKNDINVRASAADALEALSANSDEAKKCVKDAGGVHALIEAIVAPSKECMQGKHGQSLQEHATGALANVFGGMRHLIIYLGQVSQSPRLTEPIGDVIGALAYALMIFKQPESSENIFDPSVIESILVKLLKPRDTKLIQERILEAMASLYGNSSLSCYLDDAEAKRVLIALITMASADVRERLIICLSGLCHDKVGIWEAIGKREGIQLFISFLGLSSEQHQEYAVEMLKILTAQVDDSKWAVTAAGGIPPLVQLLETGSQKAKEDAACILWNLCCHSEEIRDCVERAGGIPAFLWLLKTGGPNSQETSAKTLVKLVHTADPATINQLLALLLGDDPTSKIQVIEVLGHVLSKASQEDLVHRGCAANKGLRSLVESLTSSREETKEHTASVLADLFSSRQDICGHLATDDIINPWIKLLTNNTQNVAKQVARALDALSRPVKNNNNKKKSYIAEGDIKSLIKLAKNSSIESAENAVSALANLLSDPDIAAEALAEDVVSAFTRILADGSPEGKRNASRALHQLLKNFPVCDVLKGSAQCRFAILSLVDSLKSIDVDSADAFNILEVVALLAKTKSGVNFSYPPWIALAEVPSSLETLVQCLAEGHTLVQDKAIEVLSRLCSDQQFLLSELIVSRPKSMLVLADRIVNASSLEVRVGSTALLLCAAKEKKQLITETLDQSGFLKLLLHALVDMIKHNSTSFSLETEVQTPKGFLEKNVFQDTGSFYFPDPAKILGGTVALWLLCILTSVDAKSKVIVMEAGGLEVLVGKLARYTSSAQAEFEDTEGIWISALLLAIMFQDDNVSFSSTTMRIIPTLAVLLGSDELIDRYFAAHAMASLVCTRNRGINLTIANSGAVSGIINLLGYVESEILNLVALANEFSLVKEPDQVILQHLFEIEDVRLGSTARKSIPLLVDLLRPIPDRPGAPQFAVQILIRIADGSDTNKLLMAEAGAVEALTKYLSLSPQDSTEYAISELLRVLFSNHELRQNEMALSSLNQLIAVLRLGSRSARYSAAGALNELFDAENIRNSEIACQAVQPLMDILGSVSESEQEVALSALIKLSSGNTSNTALLIDVEGSLLENVIKILSSATASEELKINAARLCSVVFSNKNIRTSASASGCMKPLITLMQSERSAAVEAAVFAIKILLDDEQHLELAAAHNIQELLVGLVSGKNYVIIEASLSALIKLGKDRVPRKLDMVEAGIIERCLELLPGASSSLCSAVVELFRILTNSGVIARRPDVAKTVEPLFAVLLRSDLTLWGQHSALQALVNILEKQQTLEAFSFTPSEAIVPLISFLESSSQAIQQLGAELLSHFLTMEDFQQDITTQSAVVPLVRLAGIGILSLQETAIKALEKISASWPKAVLDAEGIFELSKVILQEDPQPPLDLWESAAFVLSNILQYDAECFFRVELPVLVKLLFSTIESTVLLALKALMLHEKNDASSTVQMAELGAIDALLDLLRSHQCEEESGSLLEVIFNNPRVRELKLCKYAIAPLSQYLLDPHTRSEPGRLLAALALGDLSQHEGLSRSSGSVSACRALISVLEEQPTEEMKVVAICALQNFVMNSRTNRRAVAEAGGVLLIQELLLSCNPEVSGQAALMVKFLFSNHTLQEYVSNELIRSLTAALERGLWSTATINIEVLRTLNVIFSNFPKLRASEAATFCIPHLVGALKSGVEDVQGLVLDILYLLRHSWTNMSIDVAKSQAMIAAEAIPVLQMLMKTCPPRFHDKADSLLHCLPGCLTVNVMRANNLKQSMATTNAFCQLTIGNCPPRQTKVVSNSTTPEWKEGFTWAFDVPPKGQKLHIICKSKSTFGKTTLGRVTIQIDKVVTEGEYSGSLSLNHENSKDASSRSLDIEIAWSNRTTDETH</sequence>
<feature type="chain" id="PRO_0000438335" description="Protein CELLULOSE SYNTHASE INTERACTIVE 3">
    <location>
        <begin position="1"/>
        <end position="2136"/>
    </location>
</feature>
<feature type="repeat" description="ARM 1" evidence="2">
    <location>
        <begin position="27"/>
        <end position="66"/>
    </location>
</feature>
<feature type="repeat" description="ARM 2" evidence="2">
    <location>
        <begin position="71"/>
        <end position="111"/>
    </location>
</feature>
<feature type="repeat" description="ARM 3" evidence="2">
    <location>
        <begin position="113"/>
        <end position="152"/>
    </location>
</feature>
<feature type="repeat" description="ARM 4" evidence="2">
    <location>
        <begin position="159"/>
        <end position="201"/>
    </location>
</feature>
<feature type="repeat" description="ARM 5" evidence="2">
    <location>
        <begin position="204"/>
        <end position="243"/>
    </location>
</feature>
<feature type="repeat" description="ARM 6" evidence="2">
    <location>
        <begin position="246"/>
        <end position="286"/>
    </location>
</feature>
<feature type="repeat" description="ARM 7" evidence="2">
    <location>
        <begin position="289"/>
        <end position="337"/>
    </location>
</feature>
<feature type="repeat" description="ARM 8" evidence="2">
    <location>
        <begin position="376"/>
        <end position="417"/>
    </location>
</feature>
<feature type="repeat" description="ARM 9" evidence="2">
    <location>
        <begin position="419"/>
        <end position="458"/>
    </location>
</feature>
<feature type="repeat" description="ARM 10" evidence="2">
    <location>
        <begin position="461"/>
        <end position="500"/>
    </location>
</feature>
<feature type="repeat" description="ARM 11" evidence="2">
    <location>
        <begin position="503"/>
        <end position="542"/>
    </location>
</feature>
<feature type="repeat" description="ARM 12" evidence="2">
    <location>
        <begin position="545"/>
        <end position="584"/>
    </location>
</feature>
<feature type="repeat" description="ARM 13" evidence="2">
    <location>
        <begin position="586"/>
        <end position="618"/>
    </location>
</feature>
<feature type="repeat" description="ARM 14" evidence="2">
    <location>
        <begin position="619"/>
        <end position="663"/>
    </location>
</feature>
<feature type="repeat" description="ARM 15" evidence="2">
    <location>
        <begin position="666"/>
        <end position="705"/>
    </location>
</feature>
<feature type="repeat" description="ARM 16" evidence="2">
    <location>
        <begin position="711"/>
        <end position="750"/>
    </location>
</feature>
<feature type="repeat" description="ARM 17" evidence="2">
    <location>
        <begin position="752"/>
        <end position="791"/>
    </location>
</feature>
<feature type="repeat" description="ARM 18" evidence="2">
    <location>
        <begin position="811"/>
        <end position="848"/>
    </location>
</feature>
<feature type="repeat" description="ARM 19" evidence="2">
    <location>
        <begin position="849"/>
        <end position="887"/>
    </location>
</feature>
<feature type="repeat" description="ARM 20" evidence="2">
    <location>
        <begin position="936"/>
        <end position="980"/>
    </location>
</feature>
<feature type="repeat" description="ARM 21" evidence="2">
    <location>
        <begin position="1013"/>
        <end position="1041"/>
    </location>
</feature>
<feature type="repeat" description="ARM 22" evidence="2">
    <location>
        <begin position="1042"/>
        <end position="1083"/>
    </location>
</feature>
<feature type="repeat" description="ARM 23" evidence="2">
    <location>
        <begin position="1109"/>
        <end position="1149"/>
    </location>
</feature>
<feature type="repeat" description="ARM 24" evidence="2">
    <location>
        <begin position="1163"/>
        <end position="1204"/>
    </location>
</feature>
<feature type="repeat" description="ARM 25" evidence="2">
    <location>
        <begin position="1207"/>
        <end position="1247"/>
    </location>
</feature>
<feature type="repeat" description="ARM 26" evidence="2">
    <location>
        <begin position="1249"/>
        <end position="1288"/>
    </location>
</feature>
<feature type="repeat" description="ARM 27" evidence="2">
    <location>
        <begin position="1290"/>
        <end position="1329"/>
    </location>
</feature>
<feature type="repeat" description="ARM 28" evidence="2">
    <location>
        <begin position="1333"/>
        <end position="1375"/>
    </location>
</feature>
<feature type="repeat" description="ARM 29" evidence="2">
    <location>
        <begin position="1377"/>
        <end position="1416"/>
    </location>
</feature>
<feature type="repeat" description="ARM 30" evidence="2">
    <location>
        <begin position="1418"/>
        <end position="1457"/>
    </location>
</feature>
<feature type="repeat" description="ARM 31" evidence="2">
    <location>
        <begin position="1460"/>
        <end position="1499"/>
    </location>
</feature>
<feature type="repeat" description="ARM 32" evidence="2">
    <location>
        <begin position="1518"/>
        <end position="1546"/>
    </location>
</feature>
<feature type="repeat" description="ARM 33" evidence="2">
    <location>
        <begin position="1547"/>
        <end position="1585"/>
    </location>
</feature>
<feature type="repeat" description="ARM 34" evidence="2">
    <location>
        <begin position="1587"/>
        <end position="1626"/>
    </location>
</feature>
<feature type="repeat" description="ARM 35" evidence="2">
    <location>
        <begin position="1628"/>
        <end position="1669"/>
    </location>
</feature>
<feature type="repeat" description="ARM 36" evidence="2">
    <location>
        <begin position="1670"/>
        <end position="1704"/>
    </location>
</feature>
<feature type="repeat" description="ARM 37" evidence="2">
    <location>
        <begin position="1710"/>
        <end position="1750"/>
    </location>
</feature>
<feature type="repeat" description="ARM 38" evidence="2">
    <location>
        <begin position="1790"/>
        <end position="1833"/>
    </location>
</feature>
<feature type="repeat" description="ARM 39" evidence="2">
    <location>
        <begin position="1836"/>
        <end position="1875"/>
    </location>
</feature>
<feature type="repeat" description="ARM 40" evidence="2">
    <location>
        <begin position="1921"/>
        <end position="1960"/>
    </location>
</feature>
<feature type="repeat" description="ARM 41" evidence="2">
    <location>
        <begin position="1969"/>
        <end position="2008"/>
    </location>
</feature>
<feature type="domain" description="C2" evidence="3">
    <location>
        <begin position="1989"/>
        <end position="2106"/>
    </location>
</feature>
<feature type="repeat" description="ARM 42" evidence="2">
    <location>
        <begin position="2010"/>
        <end position="2035"/>
    </location>
</feature>
<feature type="sequence conflict" description="In Ref. 3; BAC42703." evidence="6" ref="3">
    <original>D</original>
    <variation>G</variation>
    <location>
        <position position="1634"/>
    </location>
</feature>
<evidence type="ECO:0000250" key="1">
    <source>
        <dbReference type="UniProtKB" id="F4IIM1"/>
    </source>
</evidence>
<evidence type="ECO:0000255" key="2"/>
<evidence type="ECO:0000255" key="3">
    <source>
        <dbReference type="PROSITE-ProRule" id="PRU00041"/>
    </source>
</evidence>
<evidence type="ECO:0000269" key="4">
    <source>
    </source>
</evidence>
<evidence type="ECO:0000303" key="5">
    <source>
    </source>
</evidence>
<evidence type="ECO:0000305" key="6"/>
<evidence type="ECO:0000312" key="7">
    <source>
        <dbReference type="Araport" id="AT1G77460"/>
    </source>
</evidence>
<evidence type="ECO:0000312" key="8">
    <source>
        <dbReference type="EMBL" id="AAG51678.1"/>
    </source>
</evidence>
<accession>F4I718</accession>
<accession>Q8GXS1</accession>
<accession>Q9CAQ9</accession>
<keyword id="KW-1003">Cell membrane</keyword>
<keyword id="KW-0133">Cell shape</keyword>
<keyword id="KW-0961">Cell wall biogenesis/degradation</keyword>
<keyword id="KW-0963">Cytoplasm</keyword>
<keyword id="KW-0206">Cytoskeleton</keyword>
<keyword id="KW-0217">Developmental protein</keyword>
<keyword id="KW-0341">Growth regulation</keyword>
<keyword id="KW-0472">Membrane</keyword>
<keyword id="KW-1185">Reference proteome</keyword>
<keyword id="KW-0677">Repeat</keyword>
<dbReference type="EMBL" id="AC010704">
    <property type="protein sequence ID" value="AAG51678.1"/>
    <property type="status" value="ALT_SEQ"/>
    <property type="molecule type" value="Genomic_DNA"/>
</dbReference>
<dbReference type="EMBL" id="CP002684">
    <property type="protein sequence ID" value="AEE35980.1"/>
    <property type="molecule type" value="Genomic_DNA"/>
</dbReference>
<dbReference type="EMBL" id="CP002684">
    <property type="protein sequence ID" value="AEE35981.1"/>
    <property type="molecule type" value="Genomic_DNA"/>
</dbReference>
<dbReference type="EMBL" id="CP002684">
    <property type="protein sequence ID" value="ANM60394.1"/>
    <property type="molecule type" value="Genomic_DNA"/>
</dbReference>
<dbReference type="EMBL" id="CP002684">
    <property type="protein sequence ID" value="ANM60395.1"/>
    <property type="molecule type" value="Genomic_DNA"/>
</dbReference>
<dbReference type="EMBL" id="AK118072">
    <property type="protein sequence ID" value="BAC42703.1"/>
    <property type="status" value="ALT_INIT"/>
    <property type="molecule type" value="mRNA"/>
</dbReference>
<dbReference type="PIR" id="H96803">
    <property type="entry name" value="H96803"/>
</dbReference>
<dbReference type="RefSeq" id="NP_001185419.1">
    <property type="nucleotide sequence ID" value="NM_001198490.2"/>
</dbReference>
<dbReference type="RefSeq" id="NP_001319395.1">
    <property type="nucleotide sequence ID" value="NM_001334782.1"/>
</dbReference>
<dbReference type="RefSeq" id="NP_001322685.1">
    <property type="nucleotide sequence ID" value="NM_001334783.1"/>
</dbReference>
<dbReference type="RefSeq" id="NP_177870.2">
    <property type="nucleotide sequence ID" value="NM_106395.4"/>
</dbReference>
<dbReference type="FunCoup" id="F4I718">
    <property type="interactions" value="1349"/>
</dbReference>
<dbReference type="STRING" id="3702.F4I718"/>
<dbReference type="iPTMnet" id="F4I718"/>
<dbReference type="PaxDb" id="3702-AT1G77460.1"/>
<dbReference type="ProteomicsDB" id="220497"/>
<dbReference type="EnsemblPlants" id="AT1G77460.1">
    <property type="protein sequence ID" value="AT1G77460.1"/>
    <property type="gene ID" value="AT1G77460"/>
</dbReference>
<dbReference type="EnsemblPlants" id="AT1G77460.2">
    <property type="protein sequence ID" value="AT1G77460.2"/>
    <property type="gene ID" value="AT1G77460"/>
</dbReference>
<dbReference type="EnsemblPlants" id="AT1G77460.3">
    <property type="protein sequence ID" value="AT1G77460.3"/>
    <property type="gene ID" value="AT1G77460"/>
</dbReference>
<dbReference type="EnsemblPlants" id="AT1G77460.4">
    <property type="protein sequence ID" value="AT1G77460.4"/>
    <property type="gene ID" value="AT1G77460"/>
</dbReference>
<dbReference type="GeneID" id="844082"/>
<dbReference type="Gramene" id="AT1G77460.1">
    <property type="protein sequence ID" value="AT1G77460.1"/>
    <property type="gene ID" value="AT1G77460"/>
</dbReference>
<dbReference type="Gramene" id="AT1G77460.2">
    <property type="protein sequence ID" value="AT1G77460.2"/>
    <property type="gene ID" value="AT1G77460"/>
</dbReference>
<dbReference type="Gramene" id="AT1G77460.3">
    <property type="protein sequence ID" value="AT1G77460.3"/>
    <property type="gene ID" value="AT1G77460"/>
</dbReference>
<dbReference type="Gramene" id="AT1G77460.4">
    <property type="protein sequence ID" value="AT1G77460.4"/>
    <property type="gene ID" value="AT1G77460"/>
</dbReference>
<dbReference type="KEGG" id="ath:AT1G77460"/>
<dbReference type="Araport" id="AT1G77460"/>
<dbReference type="TAIR" id="AT1G77460">
    <property type="gene designation" value="CSI3"/>
</dbReference>
<dbReference type="eggNOG" id="KOG0167">
    <property type="taxonomic scope" value="Eukaryota"/>
</dbReference>
<dbReference type="HOGENOM" id="CLU_233004_0_0_1"/>
<dbReference type="InParanoid" id="F4I718"/>
<dbReference type="OMA" id="NMEIRIG"/>
<dbReference type="PRO" id="PR:F4I718"/>
<dbReference type="Proteomes" id="UP000006548">
    <property type="component" value="Chromosome 1"/>
</dbReference>
<dbReference type="ExpressionAtlas" id="F4I718">
    <property type="expression patterns" value="baseline and differential"/>
</dbReference>
<dbReference type="GO" id="GO:0010330">
    <property type="term" value="C:cellulose synthase complex"/>
    <property type="evidence" value="ECO:0000314"/>
    <property type="project" value="UniProtKB"/>
</dbReference>
<dbReference type="GO" id="GO:0055028">
    <property type="term" value="C:cortical microtubule"/>
    <property type="evidence" value="ECO:0000314"/>
    <property type="project" value="UniProtKB"/>
</dbReference>
<dbReference type="GO" id="GO:0012505">
    <property type="term" value="C:endomembrane system"/>
    <property type="evidence" value="ECO:0007669"/>
    <property type="project" value="UniProtKB-SubCell"/>
</dbReference>
<dbReference type="GO" id="GO:0005886">
    <property type="term" value="C:plasma membrane"/>
    <property type="evidence" value="ECO:0000314"/>
    <property type="project" value="TAIR"/>
</dbReference>
<dbReference type="GO" id="GO:0008017">
    <property type="term" value="F:microtubule binding"/>
    <property type="evidence" value="ECO:0007669"/>
    <property type="project" value="InterPro"/>
</dbReference>
<dbReference type="GO" id="GO:0051211">
    <property type="term" value="P:anisotropic cell growth"/>
    <property type="evidence" value="ECO:0007669"/>
    <property type="project" value="InterPro"/>
</dbReference>
<dbReference type="GO" id="GO:0052324">
    <property type="term" value="P:plant-type cell wall cellulose biosynthetic process"/>
    <property type="evidence" value="ECO:0000316"/>
    <property type="project" value="TAIR"/>
</dbReference>
<dbReference type="GO" id="GO:0072699">
    <property type="term" value="P:protein localization to cortical microtubule cytoskeleton"/>
    <property type="evidence" value="ECO:0000314"/>
    <property type="project" value="UniProtKB"/>
</dbReference>
<dbReference type="GO" id="GO:0008360">
    <property type="term" value="P:regulation of cell shape"/>
    <property type="evidence" value="ECO:0007669"/>
    <property type="project" value="UniProtKB-KW"/>
</dbReference>
<dbReference type="GO" id="GO:2001006">
    <property type="term" value="P:regulation of cellulose biosynthetic process"/>
    <property type="evidence" value="ECO:0007669"/>
    <property type="project" value="InterPro"/>
</dbReference>
<dbReference type="GO" id="GO:0009826">
    <property type="term" value="P:unidimensional cell growth"/>
    <property type="evidence" value="ECO:0000316"/>
    <property type="project" value="TAIR"/>
</dbReference>
<dbReference type="CDD" id="cd00030">
    <property type="entry name" value="C2"/>
    <property type="match status" value="1"/>
</dbReference>
<dbReference type="FunFam" id="2.60.40.150:FF:000170">
    <property type="entry name" value="Protein CELLULOSE SYNTHASE INTERACTIVE 1"/>
    <property type="match status" value="1"/>
</dbReference>
<dbReference type="Gene3D" id="2.60.40.150">
    <property type="entry name" value="C2 domain"/>
    <property type="match status" value="1"/>
</dbReference>
<dbReference type="Gene3D" id="1.25.10.10">
    <property type="entry name" value="Leucine-rich Repeat Variant"/>
    <property type="match status" value="9"/>
</dbReference>
<dbReference type="InterPro" id="IPR011989">
    <property type="entry name" value="ARM-like"/>
</dbReference>
<dbReference type="InterPro" id="IPR016024">
    <property type="entry name" value="ARM-type_fold"/>
</dbReference>
<dbReference type="InterPro" id="IPR000225">
    <property type="entry name" value="Armadillo"/>
</dbReference>
<dbReference type="InterPro" id="IPR000008">
    <property type="entry name" value="C2_dom"/>
</dbReference>
<dbReference type="InterPro" id="IPR035892">
    <property type="entry name" value="C2_domain_sf"/>
</dbReference>
<dbReference type="InterPro" id="IPR044297">
    <property type="entry name" value="CSI1/2/3"/>
</dbReference>
<dbReference type="PANTHER" id="PTHR46369">
    <property type="entry name" value="PROTEIN CELLULOSE SYNTHASE INTERACTIVE 1"/>
    <property type="match status" value="1"/>
</dbReference>
<dbReference type="PANTHER" id="PTHR46369:SF1">
    <property type="entry name" value="PROTEIN CELLULOSE SYNTHASE INTERACTIVE 3"/>
    <property type="match status" value="1"/>
</dbReference>
<dbReference type="Pfam" id="PF00514">
    <property type="entry name" value="Arm"/>
    <property type="match status" value="1"/>
</dbReference>
<dbReference type="Pfam" id="PF00168">
    <property type="entry name" value="C2"/>
    <property type="match status" value="1"/>
</dbReference>
<dbReference type="SMART" id="SM00185">
    <property type="entry name" value="ARM"/>
    <property type="match status" value="18"/>
</dbReference>
<dbReference type="SMART" id="SM00239">
    <property type="entry name" value="C2"/>
    <property type="match status" value="1"/>
</dbReference>
<dbReference type="SUPFAM" id="SSF48371">
    <property type="entry name" value="ARM repeat"/>
    <property type="match status" value="4"/>
</dbReference>
<dbReference type="SUPFAM" id="SSF49562">
    <property type="entry name" value="C2 domain (Calcium/lipid-binding domain, CaLB)"/>
    <property type="match status" value="1"/>
</dbReference>
<dbReference type="PROSITE" id="PS50176">
    <property type="entry name" value="ARM_REPEAT"/>
    <property type="match status" value="2"/>
</dbReference>
<dbReference type="PROSITE" id="PS50004">
    <property type="entry name" value="C2"/>
    <property type="match status" value="1"/>
</dbReference>
<organism>
    <name type="scientific">Arabidopsis thaliana</name>
    <name type="common">Mouse-ear cress</name>
    <dbReference type="NCBI Taxonomy" id="3702"/>
    <lineage>
        <taxon>Eukaryota</taxon>
        <taxon>Viridiplantae</taxon>
        <taxon>Streptophyta</taxon>
        <taxon>Embryophyta</taxon>
        <taxon>Tracheophyta</taxon>
        <taxon>Spermatophyta</taxon>
        <taxon>Magnoliopsida</taxon>
        <taxon>eudicotyledons</taxon>
        <taxon>Gunneridae</taxon>
        <taxon>Pentapetalae</taxon>
        <taxon>rosids</taxon>
        <taxon>malvids</taxon>
        <taxon>Brassicales</taxon>
        <taxon>Brassicaceae</taxon>
        <taxon>Camelineae</taxon>
        <taxon>Arabidopsis</taxon>
    </lineage>
</organism>
<gene>
    <name evidence="5" type="primary">CSI3</name>
    <name evidence="7" type="ordered locus">At1g77460</name>
    <name evidence="8" type="ORF">T5M16.5</name>
</gene>
<comment type="function">
    <text evidence="1 4">Regulator of the microtubular cytoskeleton (By similarity). Microtubule-associated protein involved in the association of cellulase synthase (CESA) complexes (CSCs) and cortical microtubules. Promotes dynamics of CSCs in the plasma membrane in both microtubules-dependent and microtubules-independent manners. Regulates primary cell wall biosynthesis and cellulose microfibrils organization (PubMed:24368796).</text>
</comment>
<comment type="subunit">
    <text evidence="1 4">Associates with cellulase synthase (CESA) complexes (PubMed:24368796). Binds to cortical microtubules (By similarity). Interacts with CESA3 and CESA6 (PubMed:24368796).</text>
</comment>
<comment type="subcellular location">
    <subcellularLocation>
        <location evidence="4">Cell membrane</location>
        <topology evidence="6">Peripheral membrane protein</topology>
        <orientation evidence="6">Cytoplasmic side</orientation>
    </subcellularLocation>
    <subcellularLocation>
        <location evidence="1">Cytoplasm</location>
        <location evidence="1">Cytoskeleton</location>
    </subcellularLocation>
    <subcellularLocation>
        <location evidence="4">Endomembrane system</location>
    </subcellularLocation>
    <subcellularLocation>
        <location evidence="4">Cytoplasm</location>
        <location evidence="4">Cytoskeleton</location>
    </subcellularLocation>
    <text evidence="4">Colocalizes with cellulase synthase (CESA) complexes (CSCs) in a CSI1-dependent dynamic way. Present with cortical microtubules.</text>
</comment>
<comment type="tissue specificity">
    <text evidence="4">Expressed in dark-grown hypocotyls, leaves (confined to vasculature and trichomes), stamen, pollen, developing siliques, and roots. Restricted in meristematic tissue of the shoot and root. Present in distinct punctae at the cell cortex, called microtubule-associated cellulose synthase compartments, that move with constant velocities of 10 to 3000 nm/min.</text>
</comment>
<comment type="disruption phenotype">
    <text evidence="4">No visible phenotype. The csi1 csi3 double mutants shows an enhanced cell expansion defect compared to csi1 as well as an additive reduction of cellulase synthase (CESA) complexes (CSCs) velocities.</text>
</comment>
<comment type="sequence caution" evidence="6">
    <conflict type="erroneous gene model prediction">
        <sequence resource="EMBL-CDS" id="AAG51678"/>
    </conflict>
</comment>
<comment type="sequence caution" evidence="6">
    <conflict type="erroneous initiation">
        <sequence resource="EMBL-CDS" id="BAC42703"/>
    </conflict>
    <text>Truncated N-terminus.</text>
</comment>
<protein>
    <recommendedName>
        <fullName evidence="5">Protein CELLULOSE SYNTHASE INTERACTIVE 3</fullName>
    </recommendedName>
</protein>
<reference key="1">
    <citation type="journal article" date="2000" name="Nature">
        <title>Sequence and analysis of chromosome 1 of the plant Arabidopsis thaliana.</title>
        <authorList>
            <person name="Theologis A."/>
            <person name="Ecker J.R."/>
            <person name="Palm C.J."/>
            <person name="Federspiel N.A."/>
            <person name="Kaul S."/>
            <person name="White O."/>
            <person name="Alonso J."/>
            <person name="Altafi H."/>
            <person name="Araujo R."/>
            <person name="Bowman C.L."/>
            <person name="Brooks S.Y."/>
            <person name="Buehler E."/>
            <person name="Chan A."/>
            <person name="Chao Q."/>
            <person name="Chen H."/>
            <person name="Cheuk R.F."/>
            <person name="Chin C.W."/>
            <person name="Chung M.K."/>
            <person name="Conn L."/>
            <person name="Conway A.B."/>
            <person name="Conway A.R."/>
            <person name="Creasy T.H."/>
            <person name="Dewar K."/>
            <person name="Dunn P."/>
            <person name="Etgu P."/>
            <person name="Feldblyum T.V."/>
            <person name="Feng J.-D."/>
            <person name="Fong B."/>
            <person name="Fujii C.Y."/>
            <person name="Gill J.E."/>
            <person name="Goldsmith A.D."/>
            <person name="Haas B."/>
            <person name="Hansen N.F."/>
            <person name="Hughes B."/>
            <person name="Huizar L."/>
            <person name="Hunter J.L."/>
            <person name="Jenkins J."/>
            <person name="Johnson-Hopson C."/>
            <person name="Khan S."/>
            <person name="Khaykin E."/>
            <person name="Kim C.J."/>
            <person name="Koo H.L."/>
            <person name="Kremenetskaia I."/>
            <person name="Kurtz D.B."/>
            <person name="Kwan A."/>
            <person name="Lam B."/>
            <person name="Langin-Hooper S."/>
            <person name="Lee A."/>
            <person name="Lee J.M."/>
            <person name="Lenz C.A."/>
            <person name="Li J.H."/>
            <person name="Li Y.-P."/>
            <person name="Lin X."/>
            <person name="Liu S.X."/>
            <person name="Liu Z.A."/>
            <person name="Luros J.S."/>
            <person name="Maiti R."/>
            <person name="Marziali A."/>
            <person name="Militscher J."/>
            <person name="Miranda M."/>
            <person name="Nguyen M."/>
            <person name="Nierman W.C."/>
            <person name="Osborne B.I."/>
            <person name="Pai G."/>
            <person name="Peterson J."/>
            <person name="Pham P.K."/>
            <person name="Rizzo M."/>
            <person name="Rooney T."/>
            <person name="Rowley D."/>
            <person name="Sakano H."/>
            <person name="Salzberg S.L."/>
            <person name="Schwartz J.R."/>
            <person name="Shinn P."/>
            <person name="Southwick A.M."/>
            <person name="Sun H."/>
            <person name="Tallon L.J."/>
            <person name="Tambunga G."/>
            <person name="Toriumi M.J."/>
            <person name="Town C.D."/>
            <person name="Utterback T."/>
            <person name="Van Aken S."/>
            <person name="Vaysberg M."/>
            <person name="Vysotskaia V.S."/>
            <person name="Walker M."/>
            <person name="Wu D."/>
            <person name="Yu G."/>
            <person name="Fraser C.M."/>
            <person name="Venter J.C."/>
            <person name="Davis R.W."/>
        </authorList>
    </citation>
    <scope>NUCLEOTIDE SEQUENCE [LARGE SCALE GENOMIC DNA]</scope>
    <source>
        <strain>cv. Columbia</strain>
    </source>
</reference>
<reference key="2">
    <citation type="journal article" date="2017" name="Plant J.">
        <title>Araport11: a complete reannotation of the Arabidopsis thaliana reference genome.</title>
        <authorList>
            <person name="Cheng C.Y."/>
            <person name="Krishnakumar V."/>
            <person name="Chan A.P."/>
            <person name="Thibaud-Nissen F."/>
            <person name="Schobel S."/>
            <person name="Town C.D."/>
        </authorList>
    </citation>
    <scope>GENOME REANNOTATION</scope>
    <source>
        <strain>cv. Columbia</strain>
    </source>
</reference>
<reference key="3">
    <citation type="journal article" date="2002" name="Science">
        <title>Functional annotation of a full-length Arabidopsis cDNA collection.</title>
        <authorList>
            <person name="Seki M."/>
            <person name="Narusaka M."/>
            <person name="Kamiya A."/>
            <person name="Ishida J."/>
            <person name="Satou M."/>
            <person name="Sakurai T."/>
            <person name="Nakajima M."/>
            <person name="Enju A."/>
            <person name="Akiyama K."/>
            <person name="Oono Y."/>
            <person name="Muramatsu M."/>
            <person name="Hayashizaki Y."/>
            <person name="Kawai J."/>
            <person name="Carninci P."/>
            <person name="Itoh M."/>
            <person name="Ishii Y."/>
            <person name="Arakawa T."/>
            <person name="Shibata K."/>
            <person name="Shinagawa A."/>
            <person name="Shinozaki K."/>
        </authorList>
    </citation>
    <scope>NUCLEOTIDE SEQUENCE [LARGE SCALE MRNA] OF 1588-2136</scope>
    <source>
        <strain>cv. Columbia</strain>
    </source>
</reference>
<reference key="4">
    <citation type="journal article" date="2010" name="Proc. Natl. Acad. Sci. U.S.A.">
        <title>Identification of a cellulose synthase-associated protein required for cellulose biosynthesis.</title>
        <authorList>
            <person name="Gu Y."/>
            <person name="Kaplinsky N."/>
            <person name="Bringmann M."/>
            <person name="Cobb A."/>
            <person name="Carroll A."/>
            <person name="Sampathkumar A."/>
            <person name="Baskin T.I."/>
            <person name="Persson S."/>
            <person name="Somerville C.R."/>
        </authorList>
    </citation>
    <scope>GENE FAMILY</scope>
    <scope>NOMENCLATURE</scope>
    <source>
        <strain>cv. Columbia</strain>
    </source>
</reference>
<reference key="5">
    <citation type="journal article" date="2013" name="Plant Cell">
        <title>Cellulose synthase INTERACTIVE3 regulates cellulose biosynthesis in both a microtubule-dependent and microtubule-independent manner in Arabidopsis.</title>
        <authorList>
            <person name="Lei L."/>
            <person name="Li S."/>
            <person name="Du J."/>
            <person name="Bashline L."/>
            <person name="Gu Y."/>
        </authorList>
    </citation>
    <scope>FUNCTION</scope>
    <scope>DISRUPTION PHENOTYPE</scope>
    <scope>SUBUNIT</scope>
    <scope>SUBCELLULAR LOCATION</scope>
    <scope>TISSUE SPECIFICITY</scope>
    <scope>INTERACTION WITH CESA3 AND CESA6</scope>
</reference>
<reference key="6">
    <citation type="journal article" date="2014" name="Int. Rev. Cell Mol. Biol.">
        <title>Microtubule organization and microtubule-associated proteins in plant cells.</title>
        <authorList>
            <person name="Hamada T."/>
        </authorList>
    </citation>
    <scope>REVIEW</scope>
</reference>
<name>CSI3_ARATH</name>